<feature type="chain" id="PRO_1000122058" description="Exodeoxyribonuclease 7 large subunit">
    <location>
        <begin position="1"/>
        <end position="458"/>
    </location>
</feature>
<dbReference type="EC" id="3.1.11.6" evidence="1"/>
<dbReference type="EMBL" id="CU928163">
    <property type="protein sequence ID" value="CAR14002.1"/>
    <property type="molecule type" value="Genomic_DNA"/>
</dbReference>
<dbReference type="RefSeq" id="WP_000937919.1">
    <property type="nucleotide sequence ID" value="NC_011751.1"/>
</dbReference>
<dbReference type="RefSeq" id="YP_002413529.1">
    <property type="nucleotide sequence ID" value="NC_011751.1"/>
</dbReference>
<dbReference type="SMR" id="B7N693"/>
<dbReference type="STRING" id="585056.ECUMN_2825"/>
<dbReference type="KEGG" id="eum:ECUMN_2825"/>
<dbReference type="PATRIC" id="fig|585056.7.peg.3010"/>
<dbReference type="HOGENOM" id="CLU_023625_3_1_6"/>
<dbReference type="Proteomes" id="UP000007097">
    <property type="component" value="Chromosome"/>
</dbReference>
<dbReference type="GO" id="GO:0005737">
    <property type="term" value="C:cytoplasm"/>
    <property type="evidence" value="ECO:0007669"/>
    <property type="project" value="UniProtKB-SubCell"/>
</dbReference>
<dbReference type="GO" id="GO:0009318">
    <property type="term" value="C:exodeoxyribonuclease VII complex"/>
    <property type="evidence" value="ECO:0007669"/>
    <property type="project" value="InterPro"/>
</dbReference>
<dbReference type="GO" id="GO:0008855">
    <property type="term" value="F:exodeoxyribonuclease VII activity"/>
    <property type="evidence" value="ECO:0007669"/>
    <property type="project" value="UniProtKB-UniRule"/>
</dbReference>
<dbReference type="GO" id="GO:0003676">
    <property type="term" value="F:nucleic acid binding"/>
    <property type="evidence" value="ECO:0007669"/>
    <property type="project" value="InterPro"/>
</dbReference>
<dbReference type="GO" id="GO:0006308">
    <property type="term" value="P:DNA catabolic process"/>
    <property type="evidence" value="ECO:0007669"/>
    <property type="project" value="UniProtKB-UniRule"/>
</dbReference>
<dbReference type="CDD" id="cd04489">
    <property type="entry name" value="ExoVII_LU_OBF"/>
    <property type="match status" value="1"/>
</dbReference>
<dbReference type="HAMAP" id="MF_00378">
    <property type="entry name" value="Exonuc_7_L"/>
    <property type="match status" value="1"/>
</dbReference>
<dbReference type="InterPro" id="IPR003753">
    <property type="entry name" value="Exonuc_VII_L"/>
</dbReference>
<dbReference type="InterPro" id="IPR020579">
    <property type="entry name" value="Exonuc_VII_lsu_C"/>
</dbReference>
<dbReference type="InterPro" id="IPR025824">
    <property type="entry name" value="OB-fold_nuc-bd_dom"/>
</dbReference>
<dbReference type="NCBIfam" id="TIGR00237">
    <property type="entry name" value="xseA"/>
    <property type="match status" value="1"/>
</dbReference>
<dbReference type="PANTHER" id="PTHR30008">
    <property type="entry name" value="EXODEOXYRIBONUCLEASE 7 LARGE SUBUNIT"/>
    <property type="match status" value="1"/>
</dbReference>
<dbReference type="PANTHER" id="PTHR30008:SF0">
    <property type="entry name" value="EXODEOXYRIBONUCLEASE 7 LARGE SUBUNIT"/>
    <property type="match status" value="1"/>
</dbReference>
<dbReference type="Pfam" id="PF02601">
    <property type="entry name" value="Exonuc_VII_L"/>
    <property type="match status" value="1"/>
</dbReference>
<dbReference type="Pfam" id="PF13742">
    <property type="entry name" value="tRNA_anti_2"/>
    <property type="match status" value="1"/>
</dbReference>
<organism>
    <name type="scientific">Escherichia coli O17:K52:H18 (strain UMN026 / ExPEC)</name>
    <dbReference type="NCBI Taxonomy" id="585056"/>
    <lineage>
        <taxon>Bacteria</taxon>
        <taxon>Pseudomonadati</taxon>
        <taxon>Pseudomonadota</taxon>
        <taxon>Gammaproteobacteria</taxon>
        <taxon>Enterobacterales</taxon>
        <taxon>Enterobacteriaceae</taxon>
        <taxon>Escherichia</taxon>
    </lineage>
</organism>
<accession>B7N693</accession>
<gene>
    <name evidence="1" type="primary">xseA</name>
    <name type="ordered locus">ECUMN_2825</name>
</gene>
<name>EX7L_ECOLU</name>
<evidence type="ECO:0000255" key="1">
    <source>
        <dbReference type="HAMAP-Rule" id="MF_00378"/>
    </source>
</evidence>
<sequence length="458" mass="51545">MLPSQSPAIFTVSRLNQTVRLLLEHEMGQVWISGEISNFTQPASGHWYFTLKDDTAQVRCAMFRNSNRRVTFRPQHGQQVLVRANITLYEPRGDYQIIVESMQPAGEGLLQQKYEQLKAKLQAEGLFDQQYKKPLPSPAHCVGVITSKTGAALHDILHVLKRRDPSLPVIIYPTAVQGDDAPGQIVRAIELANQRNECDVLIVGRGGGSLEDLWSFNDERVARAIFASRIPVVSAVGHETDVTIADFVADLRAPTPSAAAEVVSRNQQELLRQVQSAQQRLEMAMDYYLANRTRRFTQIHHRLQQQHPQLWLARQQTMLERLQKRMSFALENQLKRAGQQQQRLTQRLNQQNPQPRIHRAQTRIQQLEYRLAETLRAQLSATRERFGNAVTHLEAVSPLSTLARGYSVTSAADGAVLKQVKQVKAGDTLTTRLGDGVVISEVSAVTKTRKPRKKAANP</sequence>
<protein>
    <recommendedName>
        <fullName evidence="1">Exodeoxyribonuclease 7 large subunit</fullName>
        <ecNumber evidence="1">3.1.11.6</ecNumber>
    </recommendedName>
    <alternativeName>
        <fullName evidence="1">Exodeoxyribonuclease VII large subunit</fullName>
        <shortName evidence="1">Exonuclease VII large subunit</shortName>
    </alternativeName>
</protein>
<comment type="function">
    <text evidence="1">Bidirectionally degrades single-stranded DNA into large acid-insoluble oligonucleotides, which are then degraded further into small acid-soluble oligonucleotides.</text>
</comment>
<comment type="catalytic activity">
    <reaction evidence="1">
        <text>Exonucleolytic cleavage in either 5'- to 3'- or 3'- to 5'-direction to yield nucleoside 5'-phosphates.</text>
        <dbReference type="EC" id="3.1.11.6"/>
    </reaction>
</comment>
<comment type="subunit">
    <text evidence="1">Heterooligomer composed of large and small subunits.</text>
</comment>
<comment type="subcellular location">
    <subcellularLocation>
        <location evidence="1">Cytoplasm</location>
    </subcellularLocation>
</comment>
<comment type="similarity">
    <text evidence="1">Belongs to the XseA family.</text>
</comment>
<proteinExistence type="inferred from homology"/>
<keyword id="KW-0963">Cytoplasm</keyword>
<keyword id="KW-0269">Exonuclease</keyword>
<keyword id="KW-0378">Hydrolase</keyword>
<keyword id="KW-0540">Nuclease</keyword>
<reference key="1">
    <citation type="journal article" date="2009" name="PLoS Genet.">
        <title>Organised genome dynamics in the Escherichia coli species results in highly diverse adaptive paths.</title>
        <authorList>
            <person name="Touchon M."/>
            <person name="Hoede C."/>
            <person name="Tenaillon O."/>
            <person name="Barbe V."/>
            <person name="Baeriswyl S."/>
            <person name="Bidet P."/>
            <person name="Bingen E."/>
            <person name="Bonacorsi S."/>
            <person name="Bouchier C."/>
            <person name="Bouvet O."/>
            <person name="Calteau A."/>
            <person name="Chiapello H."/>
            <person name="Clermont O."/>
            <person name="Cruveiller S."/>
            <person name="Danchin A."/>
            <person name="Diard M."/>
            <person name="Dossat C."/>
            <person name="Karoui M.E."/>
            <person name="Frapy E."/>
            <person name="Garry L."/>
            <person name="Ghigo J.M."/>
            <person name="Gilles A.M."/>
            <person name="Johnson J."/>
            <person name="Le Bouguenec C."/>
            <person name="Lescat M."/>
            <person name="Mangenot S."/>
            <person name="Martinez-Jehanne V."/>
            <person name="Matic I."/>
            <person name="Nassif X."/>
            <person name="Oztas S."/>
            <person name="Petit M.A."/>
            <person name="Pichon C."/>
            <person name="Rouy Z."/>
            <person name="Ruf C.S."/>
            <person name="Schneider D."/>
            <person name="Tourret J."/>
            <person name="Vacherie B."/>
            <person name="Vallenet D."/>
            <person name="Medigue C."/>
            <person name="Rocha E.P.C."/>
            <person name="Denamur E."/>
        </authorList>
    </citation>
    <scope>NUCLEOTIDE SEQUENCE [LARGE SCALE GENOMIC DNA]</scope>
    <source>
        <strain>UMN026 / ExPEC</strain>
    </source>
</reference>